<protein>
    <recommendedName>
        <fullName evidence="1">Hydroxyethylthiazole kinase</fullName>
        <ecNumber evidence="1">2.7.1.50</ecNumber>
    </recommendedName>
    <alternativeName>
        <fullName evidence="1">4-methyl-5-beta-hydroxyethylthiazole kinase</fullName>
        <shortName evidence="1">TH kinase</shortName>
        <shortName evidence="1">Thz kinase</shortName>
    </alternativeName>
</protein>
<name>THIM_SHIB3</name>
<sequence>MQVDLLSSAQSAHTLHLFHQHSPLVHCMTNDVVQTFTANTLLALGASPAMVIETEEASQFAAIASALLINVGTLTQPRAQAMRAAVEQAKSSQTPWTLDPVAVGALDYRRRFCLELLSHKPTAIRGNASEIMALAGVANGGRGVDTTDAAANAIPAAQTLARETGAIVVVTGEVDYVTDGHRIVGIHGGDPLMTKVVGTGCALSAVVAACCALPGDMLENVASACHWMKQAGERAVARSEGPGSFVPHFLDALWQLTQEVQA</sequence>
<feature type="chain" id="PRO_1000100426" description="Hydroxyethylthiazole kinase">
    <location>
        <begin position="1"/>
        <end position="262"/>
    </location>
</feature>
<feature type="binding site" evidence="1">
    <location>
        <position position="50"/>
    </location>
    <ligand>
        <name>substrate</name>
    </ligand>
</feature>
<feature type="binding site" evidence="1">
    <location>
        <position position="125"/>
    </location>
    <ligand>
        <name>ATP</name>
        <dbReference type="ChEBI" id="CHEBI:30616"/>
    </ligand>
</feature>
<feature type="binding site" evidence="1">
    <location>
        <position position="171"/>
    </location>
    <ligand>
        <name>ATP</name>
        <dbReference type="ChEBI" id="CHEBI:30616"/>
    </ligand>
</feature>
<feature type="binding site" evidence="1">
    <location>
        <position position="198"/>
    </location>
    <ligand>
        <name>substrate</name>
    </ligand>
</feature>
<comment type="function">
    <text evidence="1">Catalyzes the phosphorylation of the hydroxyl group of 4-methyl-5-beta-hydroxyethylthiazole (THZ).</text>
</comment>
<comment type="catalytic activity">
    <reaction evidence="1">
        <text>5-(2-hydroxyethyl)-4-methylthiazole + ATP = 4-methyl-5-(2-phosphooxyethyl)-thiazole + ADP + H(+)</text>
        <dbReference type="Rhea" id="RHEA:24212"/>
        <dbReference type="ChEBI" id="CHEBI:15378"/>
        <dbReference type="ChEBI" id="CHEBI:17957"/>
        <dbReference type="ChEBI" id="CHEBI:30616"/>
        <dbReference type="ChEBI" id="CHEBI:58296"/>
        <dbReference type="ChEBI" id="CHEBI:456216"/>
        <dbReference type="EC" id="2.7.1.50"/>
    </reaction>
</comment>
<comment type="cofactor">
    <cofactor evidence="1">
        <name>Mg(2+)</name>
        <dbReference type="ChEBI" id="CHEBI:18420"/>
    </cofactor>
</comment>
<comment type="pathway">
    <text evidence="1">Cofactor biosynthesis; thiamine diphosphate biosynthesis; 4-methyl-5-(2-phosphoethyl)-thiazole from 5-(2-hydroxyethyl)-4-methylthiazole: step 1/1.</text>
</comment>
<comment type="similarity">
    <text evidence="1">Belongs to the Thz kinase family.</text>
</comment>
<accession>B2TY84</accession>
<dbReference type="EC" id="2.7.1.50" evidence="1"/>
<dbReference type="EMBL" id="CP001063">
    <property type="protein sequence ID" value="ACD07044.1"/>
    <property type="molecule type" value="Genomic_DNA"/>
</dbReference>
<dbReference type="RefSeq" id="WP_001195636.1">
    <property type="nucleotide sequence ID" value="NC_010658.1"/>
</dbReference>
<dbReference type="SMR" id="B2TY84"/>
<dbReference type="STRING" id="344609.SbBS512_E1134"/>
<dbReference type="KEGG" id="sbc:SbBS512_E1134"/>
<dbReference type="HOGENOM" id="CLU_019943_0_1_6"/>
<dbReference type="UniPathway" id="UPA00060">
    <property type="reaction ID" value="UER00139"/>
</dbReference>
<dbReference type="Proteomes" id="UP000001030">
    <property type="component" value="Chromosome"/>
</dbReference>
<dbReference type="GO" id="GO:0005524">
    <property type="term" value="F:ATP binding"/>
    <property type="evidence" value="ECO:0007669"/>
    <property type="project" value="UniProtKB-UniRule"/>
</dbReference>
<dbReference type="GO" id="GO:0004417">
    <property type="term" value="F:hydroxyethylthiazole kinase activity"/>
    <property type="evidence" value="ECO:0007669"/>
    <property type="project" value="UniProtKB-UniRule"/>
</dbReference>
<dbReference type="GO" id="GO:0000287">
    <property type="term" value="F:magnesium ion binding"/>
    <property type="evidence" value="ECO:0007669"/>
    <property type="project" value="UniProtKB-UniRule"/>
</dbReference>
<dbReference type="GO" id="GO:0009228">
    <property type="term" value="P:thiamine biosynthetic process"/>
    <property type="evidence" value="ECO:0007669"/>
    <property type="project" value="UniProtKB-KW"/>
</dbReference>
<dbReference type="GO" id="GO:0009229">
    <property type="term" value="P:thiamine diphosphate biosynthetic process"/>
    <property type="evidence" value="ECO:0007669"/>
    <property type="project" value="UniProtKB-UniRule"/>
</dbReference>
<dbReference type="CDD" id="cd01170">
    <property type="entry name" value="THZ_kinase"/>
    <property type="match status" value="1"/>
</dbReference>
<dbReference type="FunFam" id="3.40.1190.20:FF:000015">
    <property type="entry name" value="Hydroxyethylthiazole kinase"/>
    <property type="match status" value="1"/>
</dbReference>
<dbReference type="Gene3D" id="3.40.1190.20">
    <property type="match status" value="1"/>
</dbReference>
<dbReference type="HAMAP" id="MF_00228">
    <property type="entry name" value="Thz_kinase"/>
    <property type="match status" value="1"/>
</dbReference>
<dbReference type="InterPro" id="IPR000417">
    <property type="entry name" value="Hyethyz_kinase"/>
</dbReference>
<dbReference type="InterPro" id="IPR029056">
    <property type="entry name" value="Ribokinase-like"/>
</dbReference>
<dbReference type="NCBIfam" id="NF006830">
    <property type="entry name" value="PRK09355.1"/>
    <property type="match status" value="1"/>
</dbReference>
<dbReference type="NCBIfam" id="TIGR00694">
    <property type="entry name" value="thiM"/>
    <property type="match status" value="1"/>
</dbReference>
<dbReference type="Pfam" id="PF02110">
    <property type="entry name" value="HK"/>
    <property type="match status" value="1"/>
</dbReference>
<dbReference type="PIRSF" id="PIRSF000513">
    <property type="entry name" value="Thz_kinase"/>
    <property type="match status" value="1"/>
</dbReference>
<dbReference type="PRINTS" id="PR01099">
    <property type="entry name" value="HYETHTZKNASE"/>
</dbReference>
<dbReference type="SUPFAM" id="SSF53613">
    <property type="entry name" value="Ribokinase-like"/>
    <property type="match status" value="1"/>
</dbReference>
<keyword id="KW-0067">ATP-binding</keyword>
<keyword id="KW-0418">Kinase</keyword>
<keyword id="KW-0460">Magnesium</keyword>
<keyword id="KW-0479">Metal-binding</keyword>
<keyword id="KW-0547">Nucleotide-binding</keyword>
<keyword id="KW-1185">Reference proteome</keyword>
<keyword id="KW-0784">Thiamine biosynthesis</keyword>
<keyword id="KW-0808">Transferase</keyword>
<organism>
    <name type="scientific">Shigella boydii serotype 18 (strain CDC 3083-94 / BS512)</name>
    <dbReference type="NCBI Taxonomy" id="344609"/>
    <lineage>
        <taxon>Bacteria</taxon>
        <taxon>Pseudomonadati</taxon>
        <taxon>Pseudomonadota</taxon>
        <taxon>Gammaproteobacteria</taxon>
        <taxon>Enterobacterales</taxon>
        <taxon>Enterobacteriaceae</taxon>
        <taxon>Shigella</taxon>
    </lineage>
</organism>
<reference key="1">
    <citation type="submission" date="2008-05" db="EMBL/GenBank/DDBJ databases">
        <title>Complete sequence of Shigella boydii serotype 18 strain BS512.</title>
        <authorList>
            <person name="Rasko D.A."/>
            <person name="Rosovitz M."/>
            <person name="Maurelli A.T."/>
            <person name="Myers G."/>
            <person name="Seshadri R."/>
            <person name="Cer R."/>
            <person name="Jiang L."/>
            <person name="Ravel J."/>
            <person name="Sebastian Y."/>
        </authorList>
    </citation>
    <scope>NUCLEOTIDE SEQUENCE [LARGE SCALE GENOMIC DNA]</scope>
    <source>
        <strain>CDC 3083-94 / BS512</strain>
    </source>
</reference>
<evidence type="ECO:0000255" key="1">
    <source>
        <dbReference type="HAMAP-Rule" id="MF_00228"/>
    </source>
</evidence>
<gene>
    <name evidence="1" type="primary">thiM</name>
    <name type="ordered locus">SbBS512_E1134</name>
</gene>
<proteinExistence type="inferred from homology"/>